<accession>P68528</accession>
<accession>P48179</accession>
<organism>
    <name type="scientific">Oncorhynchus mykiss</name>
    <name type="common">Rainbow trout</name>
    <name type="synonym">Salmo gairdneri</name>
    <dbReference type="NCBI Taxonomy" id="8022"/>
    <lineage>
        <taxon>Eukaryota</taxon>
        <taxon>Metazoa</taxon>
        <taxon>Chordata</taxon>
        <taxon>Craniata</taxon>
        <taxon>Vertebrata</taxon>
        <taxon>Euteleostomi</taxon>
        <taxon>Actinopterygii</taxon>
        <taxon>Neopterygii</taxon>
        <taxon>Teleostei</taxon>
        <taxon>Protacanthopterygii</taxon>
        <taxon>Salmoniformes</taxon>
        <taxon>Salmonidae</taxon>
        <taxon>Salmoninae</taxon>
        <taxon>Oncorhynchus</taxon>
    </lineage>
</organism>
<geneLocation type="mitochondrion"/>
<dbReference type="EMBL" id="L29771">
    <property type="protein sequence ID" value="AAB03351.1"/>
    <property type="molecule type" value="Genomic_DNA"/>
</dbReference>
<dbReference type="PIR" id="T09861">
    <property type="entry name" value="T09861"/>
</dbReference>
<dbReference type="RefSeq" id="NP_008294.1">
    <property type="nucleotide sequence ID" value="NC_001717.1"/>
</dbReference>
<dbReference type="SMR" id="P68528"/>
<dbReference type="GeneID" id="807971"/>
<dbReference type="KEGG" id="omy:807971"/>
<dbReference type="CTD" id="4509"/>
<dbReference type="OrthoDB" id="8734014at2759"/>
<dbReference type="Proteomes" id="UP000694395">
    <property type="component" value="Unplaced"/>
</dbReference>
<dbReference type="GO" id="GO:0031966">
    <property type="term" value="C:mitochondrial membrane"/>
    <property type="evidence" value="ECO:0007669"/>
    <property type="project" value="UniProtKB-SubCell"/>
</dbReference>
<dbReference type="GO" id="GO:0045259">
    <property type="term" value="C:proton-transporting ATP synthase complex"/>
    <property type="evidence" value="ECO:0007669"/>
    <property type="project" value="UniProtKB-KW"/>
</dbReference>
<dbReference type="GO" id="GO:0015078">
    <property type="term" value="F:proton transmembrane transporter activity"/>
    <property type="evidence" value="ECO:0007669"/>
    <property type="project" value="InterPro"/>
</dbReference>
<dbReference type="GO" id="GO:0015986">
    <property type="term" value="P:proton motive force-driven ATP synthesis"/>
    <property type="evidence" value="ECO:0007669"/>
    <property type="project" value="InterPro"/>
</dbReference>
<dbReference type="InterPro" id="IPR001421">
    <property type="entry name" value="ATP8_metazoa"/>
</dbReference>
<dbReference type="InterPro" id="IPR050635">
    <property type="entry name" value="ATPase_protein_8"/>
</dbReference>
<dbReference type="PANTHER" id="PTHR39937">
    <property type="entry name" value="ATP SYNTHASE PROTEIN 8"/>
    <property type="match status" value="1"/>
</dbReference>
<dbReference type="PANTHER" id="PTHR39937:SF1">
    <property type="entry name" value="ATP SYNTHASE PROTEIN 8"/>
    <property type="match status" value="1"/>
</dbReference>
<dbReference type="Pfam" id="PF00895">
    <property type="entry name" value="ATP-synt_8"/>
    <property type="match status" value="1"/>
</dbReference>
<feature type="chain" id="PRO_0000195556" description="ATP synthase F(0) complex subunit 8">
    <location>
        <begin position="1"/>
        <end position="55"/>
    </location>
</feature>
<feature type="transmembrane region" description="Helical" evidence="3">
    <location>
        <begin position="4"/>
        <end position="24"/>
    </location>
</feature>
<feature type="region of interest" description="Disordered" evidence="4">
    <location>
        <begin position="34"/>
        <end position="55"/>
    </location>
</feature>
<gene>
    <name evidence="1" type="primary">mt-atp8</name>
    <name type="synonym">atp8</name>
    <name type="synonym">atpase8</name>
    <name type="synonym">mtatp8</name>
</gene>
<evidence type="ECO:0000250" key="1">
    <source>
        <dbReference type="UniProtKB" id="P03928"/>
    </source>
</evidence>
<evidence type="ECO:0000250" key="2">
    <source>
        <dbReference type="UniProtKB" id="P19483"/>
    </source>
</evidence>
<evidence type="ECO:0000255" key="3"/>
<evidence type="ECO:0000256" key="4">
    <source>
        <dbReference type="SAM" id="MobiDB-lite"/>
    </source>
</evidence>
<evidence type="ECO:0000305" key="5"/>
<sequence>MPQLNPAPWFAILVFSWLVFLTVIPPKVLGHTFTNEPTSQSTEKAKPEPWNWPWH</sequence>
<name>ATP8_ONCMY</name>
<proteinExistence type="inferred from homology"/>
<keyword id="KW-0066">ATP synthesis</keyword>
<keyword id="KW-0138">CF(0)</keyword>
<keyword id="KW-0375">Hydrogen ion transport</keyword>
<keyword id="KW-0406">Ion transport</keyword>
<keyword id="KW-0472">Membrane</keyword>
<keyword id="KW-0496">Mitochondrion</keyword>
<keyword id="KW-0812">Transmembrane</keyword>
<keyword id="KW-1133">Transmembrane helix</keyword>
<keyword id="KW-0813">Transport</keyword>
<reference key="1">
    <citation type="journal article" date="1995" name="J. Mol. Evol.">
        <title>The complete nucleotide sequence of the mitochondrial DNA genome of the rainbow trout, Oncorhynchus mykiss.</title>
        <authorList>
            <person name="Zardoya R."/>
            <person name="Garrido-Pertierra A."/>
            <person name="Bautista J.M."/>
        </authorList>
    </citation>
    <scope>NUCLEOTIDE SEQUENCE [GENOMIC DNA]</scope>
    <source>
        <tissue>Liver</tissue>
    </source>
</reference>
<protein>
    <recommendedName>
        <fullName evidence="1">ATP synthase F(0) complex subunit 8</fullName>
    </recommendedName>
    <alternativeName>
        <fullName>A6L</fullName>
    </alternativeName>
    <alternativeName>
        <fullName>F-ATPase subunit 8</fullName>
    </alternativeName>
</protein>
<comment type="function">
    <text evidence="1 2">Subunit 8, of the mitochondrial membrane ATP synthase complex (F(1)F(0) ATP synthase or Complex V) that produces ATP from ADP in the presence of a proton gradient across the membrane which is generated by electron transport complexes of the respiratory chain. ATP synthase complex consist of a soluble F(1) head domain - the catalytic core - and a membrane F(1) domain - the membrane proton channel. These two domains are linked by a central stalk rotating inside the F(1) region and a stationary peripheral stalk. During catalysis, ATP synthesis in the catalytic domain of F(1) is coupled via a rotary mechanism of the central stalk subunits to proton translocation (By similarity). In vivo, can only synthesize ATP although its ATP hydrolase activity can be activated artificially in vitro (By similarity). Part of the complex F(0) domain (By similarity).</text>
</comment>
<comment type="subunit">
    <text evidence="1">Component of the ATP synthase complex composed at least of ATP5F1A/subunit alpha, ATP5F1B/subunit beta, ATP5MC1/subunit c (homooctomer), MT-ATP6/subunit a, MT-ATP8/subunit 8, ATP5ME/subunit e, ATP5MF/subunit f, ATP5MG/subunit g, ATP5MK/subunit k, ATP5MJ/subunit j, ATP5F1C/subunit gamma, ATP5F1D/subunit delta, ATP5F1E/subunit epsilon, ATP5PF/subunit F6, ATP5PB/subunit b, ATP5PD/subunit d, ATP5PO/subunit OSCP. ATP synthase complex consists of a soluble F(1) head domain (subunits alpha(3) and beta(3)) - the catalytic core - and a membrane F(0) domain - the membrane proton channel (subunits c, a, 8, e, f, g, k and j). These two domains are linked by a central stalk (subunits gamma, delta, and epsilon) rotating inside the F1 region and a stationary peripheral stalk (subunits F6, b, d, and OSCP).</text>
</comment>
<comment type="subcellular location">
    <subcellularLocation>
        <location>Mitochondrion membrane</location>
        <topology>Single-pass membrane protein</topology>
    </subcellularLocation>
</comment>
<comment type="similarity">
    <text evidence="5">Belongs to the ATPase protein 8 family.</text>
</comment>